<name>NADM_HALSA</name>
<reference key="1">
    <citation type="journal article" date="2000" name="Proc. Natl. Acad. Sci. U.S.A.">
        <title>Genome sequence of Halobacterium species NRC-1.</title>
        <authorList>
            <person name="Ng W.V."/>
            <person name="Kennedy S.P."/>
            <person name="Mahairas G.G."/>
            <person name="Berquist B."/>
            <person name="Pan M."/>
            <person name="Shukla H.D."/>
            <person name="Lasky S.R."/>
            <person name="Baliga N.S."/>
            <person name="Thorsson V."/>
            <person name="Sbrogna J."/>
            <person name="Swartzell S."/>
            <person name="Weir D."/>
            <person name="Hall J."/>
            <person name="Dahl T.A."/>
            <person name="Welti R."/>
            <person name="Goo Y.A."/>
            <person name="Leithauser B."/>
            <person name="Keller K."/>
            <person name="Cruz R."/>
            <person name="Danson M.J."/>
            <person name="Hough D.W."/>
            <person name="Maddocks D.G."/>
            <person name="Jablonski P.E."/>
            <person name="Krebs M.P."/>
            <person name="Angevine C.M."/>
            <person name="Dale H."/>
            <person name="Isenbarger T.A."/>
            <person name="Peck R.F."/>
            <person name="Pohlschroder M."/>
            <person name="Spudich J.L."/>
            <person name="Jung K.-H."/>
            <person name="Alam M."/>
            <person name="Freitas T."/>
            <person name="Hou S."/>
            <person name="Daniels C.J."/>
            <person name="Dennis P.P."/>
            <person name="Omer A.D."/>
            <person name="Ebhardt H."/>
            <person name="Lowe T.M."/>
            <person name="Liang P."/>
            <person name="Riley M."/>
            <person name="Hood L."/>
            <person name="DasSarma S."/>
        </authorList>
    </citation>
    <scope>NUCLEOTIDE SEQUENCE [LARGE SCALE GENOMIC DNA]</scope>
    <source>
        <strain>ATCC 700922 / JCM 11081 / NRC-1</strain>
    </source>
</reference>
<feature type="chain" id="PRO_0000134990" description="Nicotinamide-nucleotide adenylyltransferase">
    <location>
        <begin position="1"/>
        <end position="177"/>
    </location>
</feature>
<proteinExistence type="inferred from homology"/>
<organism>
    <name type="scientific">Halobacterium salinarum (strain ATCC 700922 / JCM 11081 / NRC-1)</name>
    <name type="common">Halobacterium halobium</name>
    <dbReference type="NCBI Taxonomy" id="64091"/>
    <lineage>
        <taxon>Archaea</taxon>
        <taxon>Methanobacteriati</taxon>
        <taxon>Methanobacteriota</taxon>
        <taxon>Stenosarchaea group</taxon>
        <taxon>Halobacteria</taxon>
        <taxon>Halobacteriales</taxon>
        <taxon>Halobacteriaceae</taxon>
        <taxon>Halobacterium</taxon>
        <taxon>Halobacterium salinarum NRC-34001</taxon>
    </lineage>
</organism>
<accession>Q9HSC4</accession>
<gene>
    <name type="ordered locus">VNG_0301C</name>
</gene>
<evidence type="ECO:0000255" key="1">
    <source>
        <dbReference type="HAMAP-Rule" id="MF_00243"/>
    </source>
</evidence>
<protein>
    <recommendedName>
        <fullName evidence="1">Nicotinamide-nucleotide adenylyltransferase</fullName>
        <ecNumber evidence="1">2.7.7.1</ecNumber>
    </recommendedName>
    <alternativeName>
        <fullName evidence="1">NAD(+) diphosphorylase</fullName>
    </alternativeName>
    <alternativeName>
        <fullName evidence="1">NAD(+) pyrophosphorylase</fullName>
    </alternativeName>
    <alternativeName>
        <fullName evidence="1">NMN adenylyltransferase</fullName>
    </alternativeName>
</protein>
<sequence length="177" mass="19820">MTRGFYIGRFQPFHTGHRRVIEQIATEVDELVVGIGSAGDSHSARNPFTAGERIMMITKALVEFNLVTYAVPIEDLERNAVWVSHVRSMCPKFEVAYSNNPLVIRLFNEAAVEVRQPPMYDRDVLEGAEIRRRMADGDDWESLVPDAVADVVAEIDGVERIQHVADTDANGHDSGLR</sequence>
<comment type="catalytic activity">
    <reaction evidence="1">
        <text>beta-nicotinamide D-ribonucleotide + ATP + H(+) = diphosphate + NAD(+)</text>
        <dbReference type="Rhea" id="RHEA:21360"/>
        <dbReference type="ChEBI" id="CHEBI:14649"/>
        <dbReference type="ChEBI" id="CHEBI:15378"/>
        <dbReference type="ChEBI" id="CHEBI:30616"/>
        <dbReference type="ChEBI" id="CHEBI:33019"/>
        <dbReference type="ChEBI" id="CHEBI:57540"/>
        <dbReference type="EC" id="2.7.7.1"/>
    </reaction>
</comment>
<comment type="pathway">
    <text evidence="1">Cofactor biosynthesis; NAD(+) biosynthesis; NAD(+) from nicotinamide D-ribonucleotide: step 1/1.</text>
</comment>
<comment type="subcellular location">
    <subcellularLocation>
        <location evidence="1">Cytoplasm</location>
    </subcellularLocation>
</comment>
<comment type="similarity">
    <text evidence="1">Belongs to the archaeal NMN adenylyltransferase family.</text>
</comment>
<keyword id="KW-0067">ATP-binding</keyword>
<keyword id="KW-0963">Cytoplasm</keyword>
<keyword id="KW-0520">NAD</keyword>
<keyword id="KW-0547">Nucleotide-binding</keyword>
<keyword id="KW-0548">Nucleotidyltransferase</keyword>
<keyword id="KW-0662">Pyridine nucleotide biosynthesis</keyword>
<keyword id="KW-1185">Reference proteome</keyword>
<keyword id="KW-0808">Transferase</keyword>
<dbReference type="EC" id="2.7.7.1" evidence="1"/>
<dbReference type="EMBL" id="AE004437">
    <property type="protein sequence ID" value="AAG18883.1"/>
    <property type="molecule type" value="Genomic_DNA"/>
</dbReference>
<dbReference type="PIR" id="G84189">
    <property type="entry name" value="G84189"/>
</dbReference>
<dbReference type="RefSeq" id="WP_010902177.1">
    <property type="nucleotide sequence ID" value="NC_002607.1"/>
</dbReference>
<dbReference type="SMR" id="Q9HSC4"/>
<dbReference type="FunCoup" id="Q9HSC4">
    <property type="interactions" value="8"/>
</dbReference>
<dbReference type="STRING" id="64091.VNG_0301C"/>
<dbReference type="PaxDb" id="64091-VNG_0301C"/>
<dbReference type="KEGG" id="hal:VNG_0301C"/>
<dbReference type="PATRIC" id="fig|64091.14.peg.221"/>
<dbReference type="HOGENOM" id="CLU_108783_0_0_2"/>
<dbReference type="InParanoid" id="Q9HSC4"/>
<dbReference type="OrthoDB" id="264480at2157"/>
<dbReference type="PhylomeDB" id="Q9HSC4"/>
<dbReference type="UniPathway" id="UPA00253">
    <property type="reaction ID" value="UER00600"/>
</dbReference>
<dbReference type="Proteomes" id="UP000000554">
    <property type="component" value="Chromosome"/>
</dbReference>
<dbReference type="GO" id="GO:0005737">
    <property type="term" value="C:cytoplasm"/>
    <property type="evidence" value="ECO:0007669"/>
    <property type="project" value="UniProtKB-SubCell"/>
</dbReference>
<dbReference type="GO" id="GO:0005524">
    <property type="term" value="F:ATP binding"/>
    <property type="evidence" value="ECO:0007669"/>
    <property type="project" value="UniProtKB-KW"/>
</dbReference>
<dbReference type="GO" id="GO:0000309">
    <property type="term" value="F:nicotinamide-nucleotide adenylyltransferase activity"/>
    <property type="evidence" value="ECO:0007669"/>
    <property type="project" value="UniProtKB-UniRule"/>
</dbReference>
<dbReference type="GO" id="GO:0009435">
    <property type="term" value="P:NAD biosynthetic process"/>
    <property type="evidence" value="ECO:0007669"/>
    <property type="project" value="UniProtKB-UniRule"/>
</dbReference>
<dbReference type="CDD" id="cd02166">
    <property type="entry name" value="NMNAT_Archaea"/>
    <property type="match status" value="1"/>
</dbReference>
<dbReference type="Gene3D" id="3.40.50.620">
    <property type="entry name" value="HUPs"/>
    <property type="match status" value="1"/>
</dbReference>
<dbReference type="HAMAP" id="MF_00243">
    <property type="entry name" value="NMN_adenylyltr"/>
    <property type="match status" value="1"/>
</dbReference>
<dbReference type="InterPro" id="IPR004821">
    <property type="entry name" value="Cyt_trans-like"/>
</dbReference>
<dbReference type="InterPro" id="IPR006418">
    <property type="entry name" value="NMN_Atrans_arc"/>
</dbReference>
<dbReference type="InterPro" id="IPR014729">
    <property type="entry name" value="Rossmann-like_a/b/a_fold"/>
</dbReference>
<dbReference type="NCBIfam" id="TIGR01527">
    <property type="entry name" value="arch_NMN_Atrans"/>
    <property type="match status" value="1"/>
</dbReference>
<dbReference type="NCBIfam" id="TIGR00125">
    <property type="entry name" value="cyt_tran_rel"/>
    <property type="match status" value="1"/>
</dbReference>
<dbReference type="NCBIfam" id="NF002243">
    <property type="entry name" value="PRK01153.1"/>
    <property type="match status" value="1"/>
</dbReference>
<dbReference type="PANTHER" id="PTHR21342:SF0">
    <property type="entry name" value="BIFUNCTIONAL NMN ADENYLYLTRANSFERASE_NUDIX HYDROLASE"/>
    <property type="match status" value="1"/>
</dbReference>
<dbReference type="PANTHER" id="PTHR21342">
    <property type="entry name" value="PHOSPHOPANTETHEINE ADENYLYLTRANSFERASE"/>
    <property type="match status" value="1"/>
</dbReference>
<dbReference type="Pfam" id="PF01467">
    <property type="entry name" value="CTP_transf_like"/>
    <property type="match status" value="1"/>
</dbReference>
<dbReference type="SUPFAM" id="SSF52374">
    <property type="entry name" value="Nucleotidylyl transferase"/>
    <property type="match status" value="1"/>
</dbReference>